<name>CSTP1_MOUSE</name>
<proteinExistence type="evidence at protein level"/>
<sequence length="331" mass="37550">MLSPERLALPDYEYLAQRHVLTYMEDAVCQLLENREDISQYGIARFFTDYFNSVCQGTHILFREFSFIQATPHNRASFLRAFWRCFRTVGKNGDLLTMREYHCLLQLLCPDFPLELTQKAARIVLMDDAMDCLMSFSDFLFAFQIQFYYSEFLESVAAIYQDLLSGKNPNTVIVPTSSSGQHRQRPALGDAGMLDGVEASLFYQRLENLCDRHKYSCPPPALVKEILSNVQRLTFYGFLVALSKHHGINQALGALPDKGDLMHDPAMDEELERLLVQVPGLVNSITATSEASCLPSRTPPRVGSPWKPLHRSRKLDAESDGSTEETDESET</sequence>
<feature type="chain" id="PRO_0000281427" description="Centriolar satellite-associated tubulin polyglutamylase complex regulator 1">
    <location>
        <begin position="1"/>
        <end position="331"/>
    </location>
</feature>
<feature type="region of interest" description="Required for interaction with TPGS1, LRRC49, and TTLL1" evidence="1">
    <location>
        <begin position="1"/>
        <end position="225"/>
    </location>
</feature>
<feature type="region of interest" description="Required for interaction with PCM1" evidence="1">
    <location>
        <begin position="1"/>
        <end position="111"/>
    </location>
</feature>
<feature type="region of interest" description="Required for interaction with TPGS2" evidence="1">
    <location>
        <begin position="112"/>
        <end position="331"/>
    </location>
</feature>
<feature type="region of interest" description="Disordered" evidence="2">
    <location>
        <begin position="292"/>
        <end position="331"/>
    </location>
</feature>
<feature type="compositionally biased region" description="Acidic residues" evidence="2">
    <location>
        <begin position="318"/>
        <end position="331"/>
    </location>
</feature>
<feature type="modified residue" description="Phosphoserine" evidence="6 7">
    <location>
        <position position="319"/>
    </location>
</feature>
<feature type="splice variant" id="VSP_024002" description="In isoform 2." evidence="3">
    <original>LVQVPGLVNSITATSEASCLPSRTPPRVGSPWKPLHRSRKLDAES</original>
    <variation>VVRSRLYRTPQQQRGKEPGAFGFEGRDKLEAPETVPSALAPTPNPYRWEPRE</variation>
    <location>
        <begin position="275"/>
        <end position="319"/>
    </location>
</feature>
<feature type="splice variant" id="VSP_024003" description="In isoform 2." evidence="3">
    <location>
        <begin position="320"/>
        <end position="331"/>
    </location>
</feature>
<reference key="1">
    <citation type="journal article" date="2005" name="Science">
        <title>The transcriptional landscape of the mammalian genome.</title>
        <authorList>
            <person name="Carninci P."/>
            <person name="Kasukawa T."/>
            <person name="Katayama S."/>
            <person name="Gough J."/>
            <person name="Frith M.C."/>
            <person name="Maeda N."/>
            <person name="Oyama R."/>
            <person name="Ravasi T."/>
            <person name="Lenhard B."/>
            <person name="Wells C."/>
            <person name="Kodzius R."/>
            <person name="Shimokawa K."/>
            <person name="Bajic V.B."/>
            <person name="Brenner S.E."/>
            <person name="Batalov S."/>
            <person name="Forrest A.R."/>
            <person name="Zavolan M."/>
            <person name="Davis M.J."/>
            <person name="Wilming L.G."/>
            <person name="Aidinis V."/>
            <person name="Allen J.E."/>
            <person name="Ambesi-Impiombato A."/>
            <person name="Apweiler R."/>
            <person name="Aturaliya R.N."/>
            <person name="Bailey T.L."/>
            <person name="Bansal M."/>
            <person name="Baxter L."/>
            <person name="Beisel K.W."/>
            <person name="Bersano T."/>
            <person name="Bono H."/>
            <person name="Chalk A.M."/>
            <person name="Chiu K.P."/>
            <person name="Choudhary V."/>
            <person name="Christoffels A."/>
            <person name="Clutterbuck D.R."/>
            <person name="Crowe M.L."/>
            <person name="Dalla E."/>
            <person name="Dalrymple B.P."/>
            <person name="de Bono B."/>
            <person name="Della Gatta G."/>
            <person name="di Bernardo D."/>
            <person name="Down T."/>
            <person name="Engstrom P."/>
            <person name="Fagiolini M."/>
            <person name="Faulkner G."/>
            <person name="Fletcher C.F."/>
            <person name="Fukushima T."/>
            <person name="Furuno M."/>
            <person name="Futaki S."/>
            <person name="Gariboldi M."/>
            <person name="Georgii-Hemming P."/>
            <person name="Gingeras T.R."/>
            <person name="Gojobori T."/>
            <person name="Green R.E."/>
            <person name="Gustincich S."/>
            <person name="Harbers M."/>
            <person name="Hayashi Y."/>
            <person name="Hensch T.K."/>
            <person name="Hirokawa N."/>
            <person name="Hill D."/>
            <person name="Huminiecki L."/>
            <person name="Iacono M."/>
            <person name="Ikeo K."/>
            <person name="Iwama A."/>
            <person name="Ishikawa T."/>
            <person name="Jakt M."/>
            <person name="Kanapin A."/>
            <person name="Katoh M."/>
            <person name="Kawasawa Y."/>
            <person name="Kelso J."/>
            <person name="Kitamura H."/>
            <person name="Kitano H."/>
            <person name="Kollias G."/>
            <person name="Krishnan S.P."/>
            <person name="Kruger A."/>
            <person name="Kummerfeld S.K."/>
            <person name="Kurochkin I.V."/>
            <person name="Lareau L.F."/>
            <person name="Lazarevic D."/>
            <person name="Lipovich L."/>
            <person name="Liu J."/>
            <person name="Liuni S."/>
            <person name="McWilliam S."/>
            <person name="Madan Babu M."/>
            <person name="Madera M."/>
            <person name="Marchionni L."/>
            <person name="Matsuda H."/>
            <person name="Matsuzawa S."/>
            <person name="Miki H."/>
            <person name="Mignone F."/>
            <person name="Miyake S."/>
            <person name="Morris K."/>
            <person name="Mottagui-Tabar S."/>
            <person name="Mulder N."/>
            <person name="Nakano N."/>
            <person name="Nakauchi H."/>
            <person name="Ng P."/>
            <person name="Nilsson R."/>
            <person name="Nishiguchi S."/>
            <person name="Nishikawa S."/>
            <person name="Nori F."/>
            <person name="Ohara O."/>
            <person name="Okazaki Y."/>
            <person name="Orlando V."/>
            <person name="Pang K.C."/>
            <person name="Pavan W.J."/>
            <person name="Pavesi G."/>
            <person name="Pesole G."/>
            <person name="Petrovsky N."/>
            <person name="Piazza S."/>
            <person name="Reed J."/>
            <person name="Reid J.F."/>
            <person name="Ring B.Z."/>
            <person name="Ringwald M."/>
            <person name="Rost B."/>
            <person name="Ruan Y."/>
            <person name="Salzberg S.L."/>
            <person name="Sandelin A."/>
            <person name="Schneider C."/>
            <person name="Schoenbach C."/>
            <person name="Sekiguchi K."/>
            <person name="Semple C.A."/>
            <person name="Seno S."/>
            <person name="Sessa L."/>
            <person name="Sheng Y."/>
            <person name="Shibata Y."/>
            <person name="Shimada H."/>
            <person name="Shimada K."/>
            <person name="Silva D."/>
            <person name="Sinclair B."/>
            <person name="Sperling S."/>
            <person name="Stupka E."/>
            <person name="Sugiura K."/>
            <person name="Sultana R."/>
            <person name="Takenaka Y."/>
            <person name="Taki K."/>
            <person name="Tammoja K."/>
            <person name="Tan S.L."/>
            <person name="Tang S."/>
            <person name="Taylor M.S."/>
            <person name="Tegner J."/>
            <person name="Teichmann S.A."/>
            <person name="Ueda H.R."/>
            <person name="van Nimwegen E."/>
            <person name="Verardo R."/>
            <person name="Wei C.L."/>
            <person name="Yagi K."/>
            <person name="Yamanishi H."/>
            <person name="Zabarovsky E."/>
            <person name="Zhu S."/>
            <person name="Zimmer A."/>
            <person name="Hide W."/>
            <person name="Bult C."/>
            <person name="Grimmond S.M."/>
            <person name="Teasdale R.D."/>
            <person name="Liu E.T."/>
            <person name="Brusic V."/>
            <person name="Quackenbush J."/>
            <person name="Wahlestedt C."/>
            <person name="Mattick J.S."/>
            <person name="Hume D.A."/>
            <person name="Kai C."/>
            <person name="Sasaki D."/>
            <person name="Tomaru Y."/>
            <person name="Fukuda S."/>
            <person name="Kanamori-Katayama M."/>
            <person name="Suzuki M."/>
            <person name="Aoki J."/>
            <person name="Arakawa T."/>
            <person name="Iida J."/>
            <person name="Imamura K."/>
            <person name="Itoh M."/>
            <person name="Kato T."/>
            <person name="Kawaji H."/>
            <person name="Kawagashira N."/>
            <person name="Kawashima T."/>
            <person name="Kojima M."/>
            <person name="Kondo S."/>
            <person name="Konno H."/>
            <person name="Nakano K."/>
            <person name="Ninomiya N."/>
            <person name="Nishio T."/>
            <person name="Okada M."/>
            <person name="Plessy C."/>
            <person name="Shibata K."/>
            <person name="Shiraki T."/>
            <person name="Suzuki S."/>
            <person name="Tagami M."/>
            <person name="Waki K."/>
            <person name="Watahiki A."/>
            <person name="Okamura-Oho Y."/>
            <person name="Suzuki H."/>
            <person name="Kawai J."/>
            <person name="Hayashizaki Y."/>
        </authorList>
    </citation>
    <scope>NUCLEOTIDE SEQUENCE [LARGE SCALE MRNA] (ISOFORM 1)</scope>
    <source>
        <strain>C57BL/6J</strain>
        <tissue>Corpora quadrigemina</tissue>
        <tissue>Spinal ganglion</tissue>
    </source>
</reference>
<reference key="2">
    <citation type="journal article" date="2009" name="PLoS Biol.">
        <title>Lineage-specific biology revealed by a finished genome assembly of the mouse.</title>
        <authorList>
            <person name="Church D.M."/>
            <person name="Goodstadt L."/>
            <person name="Hillier L.W."/>
            <person name="Zody M.C."/>
            <person name="Goldstein S."/>
            <person name="She X."/>
            <person name="Bult C.J."/>
            <person name="Agarwala R."/>
            <person name="Cherry J.L."/>
            <person name="DiCuccio M."/>
            <person name="Hlavina W."/>
            <person name="Kapustin Y."/>
            <person name="Meric P."/>
            <person name="Maglott D."/>
            <person name="Birtle Z."/>
            <person name="Marques A.C."/>
            <person name="Graves T."/>
            <person name="Zhou S."/>
            <person name="Teague B."/>
            <person name="Potamousis K."/>
            <person name="Churas C."/>
            <person name="Place M."/>
            <person name="Herschleb J."/>
            <person name="Runnheim R."/>
            <person name="Forrest D."/>
            <person name="Amos-Landgraf J."/>
            <person name="Schwartz D.C."/>
            <person name="Cheng Z."/>
            <person name="Lindblad-Toh K."/>
            <person name="Eichler E.E."/>
            <person name="Ponting C.P."/>
        </authorList>
    </citation>
    <scope>NUCLEOTIDE SEQUENCE [LARGE SCALE GENOMIC DNA]</scope>
    <source>
        <strain>C57BL/6J</strain>
    </source>
</reference>
<reference key="3">
    <citation type="journal article" date="2004" name="Genome Res.">
        <title>The status, quality, and expansion of the NIH full-length cDNA project: the Mammalian Gene Collection (MGC).</title>
        <authorList>
            <consortium name="The MGC Project Team"/>
        </authorList>
    </citation>
    <scope>NUCLEOTIDE SEQUENCE [LARGE SCALE MRNA] (ISOFORMS 1 AND 2)</scope>
    <source>
        <strain>FVB/N-3</strain>
        <tissue>Mammary tumor</tissue>
    </source>
</reference>
<reference key="4">
    <citation type="journal article" date="2004" name="Mol. Cell. Proteomics">
        <title>Phosphoproteomic analysis of the developing mouse brain.</title>
        <authorList>
            <person name="Ballif B.A."/>
            <person name="Villen J."/>
            <person name="Beausoleil S.A."/>
            <person name="Schwartz D."/>
            <person name="Gygi S.P."/>
        </authorList>
    </citation>
    <scope>PHOSPHORYLATION [LARGE SCALE ANALYSIS] AT SER-319</scope>
    <scope>IDENTIFICATION BY MASS SPECTROMETRY [LARGE SCALE ANALYSIS]</scope>
    <source>
        <tissue>Embryonic brain</tissue>
    </source>
</reference>
<reference key="5">
    <citation type="journal article" date="2010" name="Cell">
        <title>A tissue-specific atlas of mouse protein phosphorylation and expression.</title>
        <authorList>
            <person name="Huttlin E.L."/>
            <person name="Jedrychowski M.P."/>
            <person name="Elias J.E."/>
            <person name="Goswami T."/>
            <person name="Rad R."/>
            <person name="Beausoleil S.A."/>
            <person name="Villen J."/>
            <person name="Haas W."/>
            <person name="Sowa M.E."/>
            <person name="Gygi S.P."/>
        </authorList>
    </citation>
    <scope>PHOSPHORYLATION [LARGE SCALE ANALYSIS] AT SER-319</scope>
    <scope>IDENTIFICATION BY MASS SPECTROMETRY [LARGE SCALE ANALYSIS]</scope>
    <source>
        <tissue>Brain</tissue>
        <tissue>Testis</tissue>
    </source>
</reference>
<protein>
    <recommendedName>
        <fullName evidence="5">Centriolar satellite-associated tubulin polyglutamylase complex regulator 1</fullName>
    </recommendedName>
</protein>
<gene>
    <name evidence="5" type="primary">Cstpp1</name>
</gene>
<accession>Q8BHR8</accession>
<accession>Q3TPK0</accession>
<accession>Q5HZI4</accession>
<evidence type="ECO:0000250" key="1">
    <source>
        <dbReference type="UniProtKB" id="Q9H6J7"/>
    </source>
</evidence>
<evidence type="ECO:0000256" key="2">
    <source>
        <dbReference type="SAM" id="MobiDB-lite"/>
    </source>
</evidence>
<evidence type="ECO:0000303" key="3">
    <source>
    </source>
</evidence>
<evidence type="ECO:0000305" key="4"/>
<evidence type="ECO:0000312" key="5">
    <source>
        <dbReference type="MGI" id="MGI:1915079"/>
    </source>
</evidence>
<evidence type="ECO:0007744" key="6">
    <source>
    </source>
</evidence>
<evidence type="ECO:0007744" key="7">
    <source>
    </source>
</evidence>
<dbReference type="EMBL" id="AK045977">
    <property type="protein sequence ID" value="BAC32558.1"/>
    <property type="molecule type" value="mRNA"/>
</dbReference>
<dbReference type="EMBL" id="AK164320">
    <property type="protein sequence ID" value="BAE37736.1"/>
    <property type="status" value="ALT_FRAME"/>
    <property type="molecule type" value="mRNA"/>
</dbReference>
<dbReference type="EMBL" id="AL732478">
    <property type="status" value="NOT_ANNOTATED_CDS"/>
    <property type="molecule type" value="Genomic_DNA"/>
</dbReference>
<dbReference type="EMBL" id="BC085239">
    <property type="protein sequence ID" value="AAH85239.1"/>
    <property type="molecule type" value="mRNA"/>
</dbReference>
<dbReference type="EMBL" id="BC089006">
    <property type="protein sequence ID" value="AAH89006.1"/>
    <property type="molecule type" value="mRNA"/>
</dbReference>
<dbReference type="CCDS" id="CCDS16431.1">
    <molecule id="Q8BHR8-1"/>
</dbReference>
<dbReference type="CCDS" id="CCDS79823.1">
    <molecule id="Q8BHR8-2"/>
</dbReference>
<dbReference type="RefSeq" id="NP_001298073.1">
    <molecule id="Q8BHR8-2"/>
    <property type="nucleotide sequence ID" value="NM_001311144.1"/>
</dbReference>
<dbReference type="RefSeq" id="NP_780332.1">
    <molecule id="Q8BHR8-1"/>
    <property type="nucleotide sequence ID" value="NM_175123.5"/>
</dbReference>
<dbReference type="FunCoup" id="Q8BHR8">
    <property type="interactions" value="414"/>
</dbReference>
<dbReference type="STRING" id="10090.ENSMUSP00000099654"/>
<dbReference type="GlyGen" id="Q8BHR8">
    <property type="glycosylation" value="2 sites, 1 O-linked glycan (1 site)"/>
</dbReference>
<dbReference type="iPTMnet" id="Q8BHR8"/>
<dbReference type="PhosphoSitePlus" id="Q8BHR8"/>
<dbReference type="PaxDb" id="10090-ENSMUSP00000099654"/>
<dbReference type="Pumba" id="Q8BHR8"/>
<dbReference type="Antibodypedia" id="42909">
    <property type="antibodies" value="41 antibodies from 16 providers"/>
</dbReference>
<dbReference type="DNASU" id="228356"/>
<dbReference type="Ensembl" id="ENSMUST00000064652.14">
    <molecule id="Q8BHR8-2"/>
    <property type="protein sequence ID" value="ENSMUSP00000067770.8"/>
    <property type="gene ID" value="ENSMUSG00000040591.19"/>
</dbReference>
<dbReference type="Ensembl" id="ENSMUST00000102594.11">
    <molecule id="Q8BHR8-1"/>
    <property type="protein sequence ID" value="ENSMUSP00000099654.5"/>
    <property type="gene ID" value="ENSMUSG00000040591.19"/>
</dbReference>
<dbReference type="GeneID" id="228356"/>
<dbReference type="KEGG" id="mmu:228356"/>
<dbReference type="UCSC" id="uc008kvs.1">
    <molecule id="Q8BHR8-2"/>
    <property type="organism name" value="mouse"/>
</dbReference>
<dbReference type="UCSC" id="uc008kvt.1">
    <molecule id="Q8BHR8-1"/>
    <property type="organism name" value="mouse"/>
</dbReference>
<dbReference type="AGR" id="MGI:1915079"/>
<dbReference type="CTD" id="79096"/>
<dbReference type="MGI" id="MGI:1915079">
    <property type="gene designation" value="Cstpp1"/>
</dbReference>
<dbReference type="VEuPathDB" id="HostDB:ENSMUSG00000040591"/>
<dbReference type="eggNOG" id="ENOG502QRVN">
    <property type="taxonomic scope" value="Eukaryota"/>
</dbReference>
<dbReference type="GeneTree" id="ENSGT00390000012935"/>
<dbReference type="HOGENOM" id="CLU_064579_0_0_1"/>
<dbReference type="InParanoid" id="Q8BHR8"/>
<dbReference type="OMA" id="KATPHNR"/>
<dbReference type="OrthoDB" id="197906at2759"/>
<dbReference type="PhylomeDB" id="Q8BHR8"/>
<dbReference type="TreeFam" id="TF329168"/>
<dbReference type="BioGRID-ORCS" id="228356">
    <property type="hits" value="0 hits in 77 CRISPR screens"/>
</dbReference>
<dbReference type="PRO" id="PR:Q8BHR8"/>
<dbReference type="Proteomes" id="UP000000589">
    <property type="component" value="Chromosome 2"/>
</dbReference>
<dbReference type="RNAct" id="Q8BHR8">
    <property type="molecule type" value="protein"/>
</dbReference>
<dbReference type="Bgee" id="ENSMUSG00000040591">
    <property type="expression patterns" value="Expressed in retinal neural layer and 261 other cell types or tissues"/>
</dbReference>
<dbReference type="ExpressionAtlas" id="Q8BHR8">
    <property type="expression patterns" value="baseline and differential"/>
</dbReference>
<dbReference type="GO" id="GO:0034451">
    <property type="term" value="C:centriolar satellite"/>
    <property type="evidence" value="ECO:0007669"/>
    <property type="project" value="UniProtKB-SubCell"/>
</dbReference>
<dbReference type="GO" id="GO:0005737">
    <property type="term" value="C:cytoplasm"/>
    <property type="evidence" value="ECO:0007669"/>
    <property type="project" value="UniProtKB-KW"/>
</dbReference>
<dbReference type="GO" id="GO:0005874">
    <property type="term" value="C:microtubule"/>
    <property type="evidence" value="ECO:0007669"/>
    <property type="project" value="UniProtKB-KW"/>
</dbReference>
<dbReference type="GO" id="GO:0030674">
    <property type="term" value="F:protein-macromolecule adaptor activity"/>
    <property type="evidence" value="ECO:0007669"/>
    <property type="project" value="Ensembl"/>
</dbReference>
<dbReference type="GO" id="GO:0061635">
    <property type="term" value="P:regulation of protein complex stability"/>
    <property type="evidence" value="ECO:0007669"/>
    <property type="project" value="Ensembl"/>
</dbReference>
<dbReference type="CDD" id="cd22959">
    <property type="entry name" value="DD_C11orf49"/>
    <property type="match status" value="1"/>
</dbReference>
<dbReference type="InterPro" id="IPR038968">
    <property type="entry name" value="CSTPP1"/>
</dbReference>
<dbReference type="PANTHER" id="PTHR34252:SF1">
    <property type="entry name" value="CENTRIOLAR SATELLITE-ASSOCIATED TUBULIN POLYGLUTAMYLASE COMPLEX REGULATOR 1"/>
    <property type="match status" value="1"/>
</dbReference>
<dbReference type="PANTHER" id="PTHR34252">
    <property type="entry name" value="UPF0705 PROTEIN C11ORF49"/>
    <property type="match status" value="1"/>
</dbReference>
<keyword id="KW-0025">Alternative splicing</keyword>
<keyword id="KW-0963">Cytoplasm</keyword>
<keyword id="KW-0206">Cytoskeleton</keyword>
<keyword id="KW-0493">Microtubule</keyword>
<keyword id="KW-0597">Phosphoprotein</keyword>
<keyword id="KW-1185">Reference proteome</keyword>
<comment type="function">
    <text evidence="1">Regulator of the tubulin polyglutamylase complex (TPGC) that controls cytoskeletal organization, nuclear shape, and cilium disassembly by balancing microtubule and actin assembly. Regulates the assembly and stability of the TPGC and thereby modulates polyglutamylation of the microtubule, which antagonizes MAP4 binding.</text>
</comment>
<comment type="subunit">
    <text evidence="1">Interacts with PCM1. Interacts with TTLL1, TPGS1, TPGS2 and LRRC49; the interactions link CSTPP1 to the complex TPGC. Binds to alpha-tubulin.</text>
</comment>
<comment type="subcellular location">
    <subcellularLocation>
        <location evidence="1">Cytoplasm</location>
        <location evidence="1">Cytoskeleton</location>
        <location evidence="1">Microtubule organizing center</location>
        <location evidence="1">Centrosome</location>
        <location evidence="1">Centriolar satellite</location>
    </subcellularLocation>
    <subcellularLocation>
        <location evidence="1">Cytoplasm</location>
        <location evidence="1">Cytoskeleton</location>
    </subcellularLocation>
    <text evidence="1">Associated with microtubules.</text>
</comment>
<comment type="alternative products">
    <event type="alternative splicing"/>
    <isoform>
        <id>Q8BHR8-1</id>
        <name>1</name>
        <sequence type="displayed"/>
    </isoform>
    <isoform>
        <id>Q8BHR8-2</id>
        <name>2</name>
        <sequence type="described" ref="VSP_024002 VSP_024003"/>
    </isoform>
</comment>
<comment type="similarity">
    <text evidence="4">Belongs to the CSTPP1 family.</text>
</comment>
<comment type="sequence caution" evidence="4">
    <conflict type="frameshift">
        <sequence resource="EMBL-CDS" id="BAE37736"/>
    </conflict>
</comment>
<organism>
    <name type="scientific">Mus musculus</name>
    <name type="common">Mouse</name>
    <dbReference type="NCBI Taxonomy" id="10090"/>
    <lineage>
        <taxon>Eukaryota</taxon>
        <taxon>Metazoa</taxon>
        <taxon>Chordata</taxon>
        <taxon>Craniata</taxon>
        <taxon>Vertebrata</taxon>
        <taxon>Euteleostomi</taxon>
        <taxon>Mammalia</taxon>
        <taxon>Eutheria</taxon>
        <taxon>Euarchontoglires</taxon>
        <taxon>Glires</taxon>
        <taxon>Rodentia</taxon>
        <taxon>Myomorpha</taxon>
        <taxon>Muroidea</taxon>
        <taxon>Muridae</taxon>
        <taxon>Murinae</taxon>
        <taxon>Mus</taxon>
        <taxon>Mus</taxon>
    </lineage>
</organism>